<gene>
    <name evidence="1" type="primary">rpmH</name>
    <name type="ordered locus">EFER_3999</name>
</gene>
<organism>
    <name type="scientific">Escherichia fergusonii (strain ATCC 35469 / DSM 13698 / CCUG 18766 / IAM 14443 / JCM 21226 / LMG 7866 / NBRC 102419 / NCTC 12128 / CDC 0568-73)</name>
    <dbReference type="NCBI Taxonomy" id="585054"/>
    <lineage>
        <taxon>Bacteria</taxon>
        <taxon>Pseudomonadati</taxon>
        <taxon>Pseudomonadota</taxon>
        <taxon>Gammaproteobacteria</taxon>
        <taxon>Enterobacterales</taxon>
        <taxon>Enterobacteriaceae</taxon>
        <taxon>Escherichia</taxon>
    </lineage>
</organism>
<accession>B7LK45</accession>
<sequence length="46" mass="5380">MKRTFQPSVLKRNRSHGFRARMATKNGRQVLARRRAKGRARLTVSK</sequence>
<dbReference type="EMBL" id="CU928158">
    <property type="protein sequence ID" value="CAQ91433.1"/>
    <property type="molecule type" value="Genomic_DNA"/>
</dbReference>
<dbReference type="RefSeq" id="WP_000831330.1">
    <property type="nucleotide sequence ID" value="NC_011740.1"/>
</dbReference>
<dbReference type="SMR" id="B7LK45"/>
<dbReference type="GeneID" id="98190980"/>
<dbReference type="KEGG" id="efe:EFER_3999"/>
<dbReference type="HOGENOM" id="CLU_129938_2_1_6"/>
<dbReference type="OrthoDB" id="9804164at2"/>
<dbReference type="Proteomes" id="UP000000745">
    <property type="component" value="Chromosome"/>
</dbReference>
<dbReference type="GO" id="GO:1990904">
    <property type="term" value="C:ribonucleoprotein complex"/>
    <property type="evidence" value="ECO:0007669"/>
    <property type="project" value="UniProtKB-KW"/>
</dbReference>
<dbReference type="GO" id="GO:0005840">
    <property type="term" value="C:ribosome"/>
    <property type="evidence" value="ECO:0007669"/>
    <property type="project" value="UniProtKB-KW"/>
</dbReference>
<dbReference type="GO" id="GO:0003735">
    <property type="term" value="F:structural constituent of ribosome"/>
    <property type="evidence" value="ECO:0007669"/>
    <property type="project" value="InterPro"/>
</dbReference>
<dbReference type="GO" id="GO:0006412">
    <property type="term" value="P:translation"/>
    <property type="evidence" value="ECO:0007669"/>
    <property type="project" value="UniProtKB-UniRule"/>
</dbReference>
<dbReference type="FunFam" id="1.10.287.3980:FF:000001">
    <property type="entry name" value="Mitochondrial ribosomal protein L34"/>
    <property type="match status" value="1"/>
</dbReference>
<dbReference type="Gene3D" id="1.10.287.3980">
    <property type="match status" value="1"/>
</dbReference>
<dbReference type="HAMAP" id="MF_00391">
    <property type="entry name" value="Ribosomal_bL34"/>
    <property type="match status" value="1"/>
</dbReference>
<dbReference type="InterPro" id="IPR000271">
    <property type="entry name" value="Ribosomal_bL34"/>
</dbReference>
<dbReference type="InterPro" id="IPR020939">
    <property type="entry name" value="Ribosomal_bL34_CS"/>
</dbReference>
<dbReference type="NCBIfam" id="TIGR01030">
    <property type="entry name" value="rpmH_bact"/>
    <property type="match status" value="1"/>
</dbReference>
<dbReference type="PANTHER" id="PTHR14503:SF4">
    <property type="entry name" value="LARGE RIBOSOMAL SUBUNIT PROTEIN BL34M"/>
    <property type="match status" value="1"/>
</dbReference>
<dbReference type="PANTHER" id="PTHR14503">
    <property type="entry name" value="MITOCHONDRIAL RIBOSOMAL PROTEIN 34 FAMILY MEMBER"/>
    <property type="match status" value="1"/>
</dbReference>
<dbReference type="Pfam" id="PF00468">
    <property type="entry name" value="Ribosomal_L34"/>
    <property type="match status" value="1"/>
</dbReference>
<dbReference type="PROSITE" id="PS00784">
    <property type="entry name" value="RIBOSOMAL_L34"/>
    <property type="match status" value="1"/>
</dbReference>
<protein>
    <recommendedName>
        <fullName evidence="1">Large ribosomal subunit protein bL34</fullName>
    </recommendedName>
    <alternativeName>
        <fullName evidence="2">50S ribosomal protein L34</fullName>
    </alternativeName>
</protein>
<name>RL34_ESCF3</name>
<reference key="1">
    <citation type="journal article" date="2009" name="PLoS Genet.">
        <title>Organised genome dynamics in the Escherichia coli species results in highly diverse adaptive paths.</title>
        <authorList>
            <person name="Touchon M."/>
            <person name="Hoede C."/>
            <person name="Tenaillon O."/>
            <person name="Barbe V."/>
            <person name="Baeriswyl S."/>
            <person name="Bidet P."/>
            <person name="Bingen E."/>
            <person name="Bonacorsi S."/>
            <person name="Bouchier C."/>
            <person name="Bouvet O."/>
            <person name="Calteau A."/>
            <person name="Chiapello H."/>
            <person name="Clermont O."/>
            <person name="Cruveiller S."/>
            <person name="Danchin A."/>
            <person name="Diard M."/>
            <person name="Dossat C."/>
            <person name="Karoui M.E."/>
            <person name="Frapy E."/>
            <person name="Garry L."/>
            <person name="Ghigo J.M."/>
            <person name="Gilles A.M."/>
            <person name="Johnson J."/>
            <person name="Le Bouguenec C."/>
            <person name="Lescat M."/>
            <person name="Mangenot S."/>
            <person name="Martinez-Jehanne V."/>
            <person name="Matic I."/>
            <person name="Nassif X."/>
            <person name="Oztas S."/>
            <person name="Petit M.A."/>
            <person name="Pichon C."/>
            <person name="Rouy Z."/>
            <person name="Ruf C.S."/>
            <person name="Schneider D."/>
            <person name="Tourret J."/>
            <person name="Vacherie B."/>
            <person name="Vallenet D."/>
            <person name="Medigue C."/>
            <person name="Rocha E.P.C."/>
            <person name="Denamur E."/>
        </authorList>
    </citation>
    <scope>NUCLEOTIDE SEQUENCE [LARGE SCALE GENOMIC DNA]</scope>
    <source>
        <strain>ATCC 35469 / DSM 13698 / BCRC 15582 / CCUG 18766 / IAM 14443 / JCM 21226 / LMG 7866 / NBRC 102419 / NCTC 12128 / CDC 0568-73</strain>
    </source>
</reference>
<comment type="similarity">
    <text evidence="1">Belongs to the bacterial ribosomal protein bL34 family.</text>
</comment>
<feature type="chain" id="PRO_1000196050" description="Large ribosomal subunit protein bL34">
    <location>
        <begin position="1"/>
        <end position="46"/>
    </location>
</feature>
<keyword id="KW-0687">Ribonucleoprotein</keyword>
<keyword id="KW-0689">Ribosomal protein</keyword>
<proteinExistence type="inferred from homology"/>
<evidence type="ECO:0000255" key="1">
    <source>
        <dbReference type="HAMAP-Rule" id="MF_00391"/>
    </source>
</evidence>
<evidence type="ECO:0000305" key="2"/>